<feature type="chain" id="PRO_0000111415" description="Small ribosomal subunit protein uS9">
    <location>
        <begin position="1"/>
        <end position="130"/>
    </location>
</feature>
<dbReference type="EMBL" id="AL766844">
    <property type="protein sequence ID" value="CAD45855.1"/>
    <property type="molecule type" value="Genomic_DNA"/>
</dbReference>
<dbReference type="RefSeq" id="WP_000035940.1">
    <property type="nucleotide sequence ID" value="NC_004368.1"/>
</dbReference>
<dbReference type="SMR" id="Q8E7E4"/>
<dbReference type="GeneID" id="66885190"/>
<dbReference type="KEGG" id="san:rpsI"/>
<dbReference type="eggNOG" id="COG0103">
    <property type="taxonomic scope" value="Bacteria"/>
</dbReference>
<dbReference type="HOGENOM" id="CLU_046483_2_1_9"/>
<dbReference type="Proteomes" id="UP000000823">
    <property type="component" value="Chromosome"/>
</dbReference>
<dbReference type="GO" id="GO:0022627">
    <property type="term" value="C:cytosolic small ribosomal subunit"/>
    <property type="evidence" value="ECO:0007669"/>
    <property type="project" value="TreeGrafter"/>
</dbReference>
<dbReference type="GO" id="GO:0003723">
    <property type="term" value="F:RNA binding"/>
    <property type="evidence" value="ECO:0007669"/>
    <property type="project" value="TreeGrafter"/>
</dbReference>
<dbReference type="GO" id="GO:0003735">
    <property type="term" value="F:structural constituent of ribosome"/>
    <property type="evidence" value="ECO:0007669"/>
    <property type="project" value="InterPro"/>
</dbReference>
<dbReference type="GO" id="GO:0006412">
    <property type="term" value="P:translation"/>
    <property type="evidence" value="ECO:0007669"/>
    <property type="project" value="UniProtKB-UniRule"/>
</dbReference>
<dbReference type="FunFam" id="3.30.230.10:FF:000001">
    <property type="entry name" value="30S ribosomal protein S9"/>
    <property type="match status" value="1"/>
</dbReference>
<dbReference type="Gene3D" id="3.30.230.10">
    <property type="match status" value="1"/>
</dbReference>
<dbReference type="HAMAP" id="MF_00532_B">
    <property type="entry name" value="Ribosomal_uS9_B"/>
    <property type="match status" value="1"/>
</dbReference>
<dbReference type="InterPro" id="IPR020568">
    <property type="entry name" value="Ribosomal_Su5_D2-typ_SF"/>
</dbReference>
<dbReference type="InterPro" id="IPR000754">
    <property type="entry name" value="Ribosomal_uS9"/>
</dbReference>
<dbReference type="InterPro" id="IPR023035">
    <property type="entry name" value="Ribosomal_uS9_bac/plastid"/>
</dbReference>
<dbReference type="InterPro" id="IPR020574">
    <property type="entry name" value="Ribosomal_uS9_CS"/>
</dbReference>
<dbReference type="InterPro" id="IPR014721">
    <property type="entry name" value="Ribsml_uS5_D2-typ_fold_subgr"/>
</dbReference>
<dbReference type="NCBIfam" id="NF001099">
    <property type="entry name" value="PRK00132.1"/>
    <property type="match status" value="1"/>
</dbReference>
<dbReference type="PANTHER" id="PTHR21569">
    <property type="entry name" value="RIBOSOMAL PROTEIN S9"/>
    <property type="match status" value="1"/>
</dbReference>
<dbReference type="PANTHER" id="PTHR21569:SF1">
    <property type="entry name" value="SMALL RIBOSOMAL SUBUNIT PROTEIN US9M"/>
    <property type="match status" value="1"/>
</dbReference>
<dbReference type="Pfam" id="PF00380">
    <property type="entry name" value="Ribosomal_S9"/>
    <property type="match status" value="1"/>
</dbReference>
<dbReference type="SUPFAM" id="SSF54211">
    <property type="entry name" value="Ribosomal protein S5 domain 2-like"/>
    <property type="match status" value="1"/>
</dbReference>
<dbReference type="PROSITE" id="PS00360">
    <property type="entry name" value="RIBOSOMAL_S9"/>
    <property type="match status" value="1"/>
</dbReference>
<organism>
    <name type="scientific">Streptococcus agalactiae serotype III (strain NEM316)</name>
    <dbReference type="NCBI Taxonomy" id="211110"/>
    <lineage>
        <taxon>Bacteria</taxon>
        <taxon>Bacillati</taxon>
        <taxon>Bacillota</taxon>
        <taxon>Bacilli</taxon>
        <taxon>Lactobacillales</taxon>
        <taxon>Streptococcaceae</taxon>
        <taxon>Streptococcus</taxon>
    </lineage>
</organism>
<gene>
    <name evidence="1" type="primary">rpsI</name>
    <name type="ordered locus">gbs0210</name>
</gene>
<reference key="1">
    <citation type="journal article" date="2002" name="Mol. Microbiol.">
        <title>Genome sequence of Streptococcus agalactiae, a pathogen causing invasive neonatal disease.</title>
        <authorList>
            <person name="Glaser P."/>
            <person name="Rusniok C."/>
            <person name="Buchrieser C."/>
            <person name="Chevalier F."/>
            <person name="Frangeul L."/>
            <person name="Msadek T."/>
            <person name="Zouine M."/>
            <person name="Couve E."/>
            <person name="Lalioui L."/>
            <person name="Poyart C."/>
            <person name="Trieu-Cuot P."/>
            <person name="Kunst F."/>
        </authorList>
    </citation>
    <scope>NUCLEOTIDE SEQUENCE [LARGE SCALE GENOMIC DNA]</scope>
    <source>
        <strain>NEM316</strain>
    </source>
</reference>
<keyword id="KW-0687">Ribonucleoprotein</keyword>
<keyword id="KW-0689">Ribosomal protein</keyword>
<accession>Q8E7E4</accession>
<name>RS9_STRA3</name>
<protein>
    <recommendedName>
        <fullName evidence="1">Small ribosomal subunit protein uS9</fullName>
    </recommendedName>
    <alternativeName>
        <fullName evidence="2">30S ribosomal protein S9</fullName>
    </alternativeName>
</protein>
<proteinExistence type="inferred from homology"/>
<comment type="similarity">
    <text evidence="1">Belongs to the universal ribosomal protein uS9 family.</text>
</comment>
<evidence type="ECO:0000255" key="1">
    <source>
        <dbReference type="HAMAP-Rule" id="MF_00532"/>
    </source>
</evidence>
<evidence type="ECO:0000305" key="2"/>
<sequence>MAQAQYAGTGRRKNAVARVRLVPGTGKITINKKDVEEYIPHADLRLVINQPFAVTSTQGSYDVFVNVVGGGYAGQSGAIRHGISRALLEVDPDFRDSLKRAGLLTRDARMVERKKPGLKKARKASQFSKR</sequence>